<evidence type="ECO:0000250" key="1"/>
<evidence type="ECO:0000255" key="2">
    <source>
        <dbReference type="PROSITE-ProRule" id="PRU00794"/>
    </source>
</evidence>
<evidence type="ECO:0000269" key="3">
    <source>
    </source>
</evidence>
<evidence type="ECO:0000269" key="4">
    <source>
    </source>
</evidence>
<evidence type="ECO:0000305" key="5"/>
<evidence type="ECO:0000305" key="6">
    <source>
    </source>
</evidence>
<evidence type="ECO:0000305" key="7">
    <source>
    </source>
</evidence>
<evidence type="ECO:0007744" key="8">
    <source>
    </source>
</evidence>
<proteinExistence type="evidence at protein level"/>
<sequence length="210" mass="23253">MLPDGLSAEDEQRCRQLLARTTARLRSRPAAAAVLVPLCLVRGVPALLYTLRSSRLVGRHKGEVSFPGGKCDPDDQDVIHTALRETQEELGLEVPKEHVWGVLQPVYDREKATIVPVLANVGPLDLQSLRPNLEEVDEVFEMSLAHLLQTQNQGYTHFCQGGHFSYTLPVFLHGPHRVWGLTAVITELTLKLLAPGFYQPSLAVPELPRG</sequence>
<accession>Q9CR24</accession>
<accession>Q3TDQ2</accession>
<organism>
    <name type="scientific">Mus musculus</name>
    <name type="common">Mouse</name>
    <dbReference type="NCBI Taxonomy" id="10090"/>
    <lineage>
        <taxon>Eukaryota</taxon>
        <taxon>Metazoa</taxon>
        <taxon>Chordata</taxon>
        <taxon>Craniata</taxon>
        <taxon>Vertebrata</taxon>
        <taxon>Euteleostomi</taxon>
        <taxon>Mammalia</taxon>
        <taxon>Eutheria</taxon>
        <taxon>Euarchontoglires</taxon>
        <taxon>Glires</taxon>
        <taxon>Rodentia</taxon>
        <taxon>Myomorpha</taxon>
        <taxon>Muroidea</taxon>
        <taxon>Muridae</taxon>
        <taxon>Murinae</taxon>
        <taxon>Mus</taxon>
        <taxon>Mus</taxon>
    </lineage>
</organism>
<comment type="function">
    <text evidence="3 4">Acyl-CoA diphosphatase that mediates the hydrolysis of a wide range of CoA and CoA esters yielding 3',5'-ADP and the corresponding 4'-phosphopantetheine derivative as products (PubMed:31004344). Hydrolyzes short- and medium-chain acyl-CoAs, exhibiting the highest activity toward free CoA, hexanoyl-CoA, and octanoyl-CoA and the lowest activity against acetyl-CoA (PubMed:31004344). Exhibits decapping activity towards dpCoA-capped RNAs in vitro (PubMed:32432673).</text>
</comment>
<comment type="catalytic activity">
    <reaction evidence="3">
        <text>an acyl-CoA + H2O = an acyl-4'-phosphopantetheine + adenosine 3',5'-bisphosphate + 2 H(+)</text>
        <dbReference type="Rhea" id="RHEA:50044"/>
        <dbReference type="ChEBI" id="CHEBI:15377"/>
        <dbReference type="ChEBI" id="CHEBI:15378"/>
        <dbReference type="ChEBI" id="CHEBI:58342"/>
        <dbReference type="ChEBI" id="CHEBI:58343"/>
        <dbReference type="ChEBI" id="CHEBI:132023"/>
    </reaction>
    <physiologicalReaction direction="left-to-right" evidence="6">
        <dbReference type="Rhea" id="RHEA:50045"/>
    </physiologicalReaction>
</comment>
<comment type="catalytic activity">
    <reaction evidence="3">
        <text>CoA + H2O = (R)-4'-phosphopantetheine + adenosine 3',5'-bisphosphate + 2 H(+)</text>
        <dbReference type="Rhea" id="RHEA:64988"/>
        <dbReference type="ChEBI" id="CHEBI:15377"/>
        <dbReference type="ChEBI" id="CHEBI:15378"/>
        <dbReference type="ChEBI" id="CHEBI:57287"/>
        <dbReference type="ChEBI" id="CHEBI:58343"/>
        <dbReference type="ChEBI" id="CHEBI:61723"/>
        <dbReference type="EC" id="3.6.1.77"/>
    </reaction>
    <physiologicalReaction direction="left-to-right" evidence="6">
        <dbReference type="Rhea" id="RHEA:64989"/>
    </physiologicalReaction>
</comment>
<comment type="catalytic activity">
    <reaction evidence="3">
        <text>acetyl-CoA + H2O = S-acetyl-4'-phosphopantetheine + adenosine 3',5'-bisphosphate + 2 H(+)</text>
        <dbReference type="Rhea" id="RHEA:64992"/>
        <dbReference type="ChEBI" id="CHEBI:15377"/>
        <dbReference type="ChEBI" id="CHEBI:15378"/>
        <dbReference type="ChEBI" id="CHEBI:57288"/>
        <dbReference type="ChEBI" id="CHEBI:58343"/>
        <dbReference type="ChEBI" id="CHEBI:156266"/>
    </reaction>
    <physiologicalReaction direction="left-to-right" evidence="6">
        <dbReference type="Rhea" id="RHEA:64993"/>
    </physiologicalReaction>
</comment>
<comment type="catalytic activity">
    <reaction evidence="3">
        <text>butanoyl-CoA + H2O = S-butanoyl-4'-phosphopantetheine + adenosine 3',5'-bisphosphate + 2 H(+)</text>
        <dbReference type="Rhea" id="RHEA:49976"/>
        <dbReference type="ChEBI" id="CHEBI:15377"/>
        <dbReference type="ChEBI" id="CHEBI:15378"/>
        <dbReference type="ChEBI" id="CHEBI:57371"/>
        <dbReference type="ChEBI" id="CHEBI:58343"/>
        <dbReference type="ChEBI" id="CHEBI:132011"/>
    </reaction>
    <physiologicalReaction direction="left-to-right" evidence="6">
        <dbReference type="Rhea" id="RHEA:49977"/>
    </physiologicalReaction>
</comment>
<comment type="catalytic activity">
    <reaction evidence="3">
        <text>hexanoyl-CoA + H2O = hexanoyl-4'-phosphopantetheine + adenosine 3',5'-bisphosphate + 2 H(+)</text>
        <dbReference type="Rhea" id="RHEA:49980"/>
        <dbReference type="ChEBI" id="CHEBI:15377"/>
        <dbReference type="ChEBI" id="CHEBI:15378"/>
        <dbReference type="ChEBI" id="CHEBI:58343"/>
        <dbReference type="ChEBI" id="CHEBI:62620"/>
        <dbReference type="ChEBI" id="CHEBI:132012"/>
    </reaction>
    <physiologicalReaction direction="left-to-right" evidence="6">
        <dbReference type="Rhea" id="RHEA:49981"/>
    </physiologicalReaction>
</comment>
<comment type="catalytic activity">
    <reaction evidence="3">
        <text>octanoyl-CoA + H2O = S-octanoyl-4'-phosphopantetheine + adenosine 3',5'-bisphosphate + 2 H(+)</text>
        <dbReference type="Rhea" id="RHEA:50016"/>
        <dbReference type="ChEBI" id="CHEBI:15377"/>
        <dbReference type="ChEBI" id="CHEBI:15378"/>
        <dbReference type="ChEBI" id="CHEBI:57386"/>
        <dbReference type="ChEBI" id="CHEBI:58343"/>
        <dbReference type="ChEBI" id="CHEBI:132013"/>
    </reaction>
    <physiologicalReaction direction="left-to-right" evidence="6">
        <dbReference type="Rhea" id="RHEA:50017"/>
    </physiologicalReaction>
</comment>
<comment type="catalytic activity">
    <reaction evidence="3">
        <text>propanoyl-CoA + H2O = propanoyl-4'-phosphopantetheine + adenosine 3',5'-bisphosphate + 2 H(+)</text>
        <dbReference type="Rhea" id="RHEA:67464"/>
        <dbReference type="ChEBI" id="CHEBI:15377"/>
        <dbReference type="ChEBI" id="CHEBI:15378"/>
        <dbReference type="ChEBI" id="CHEBI:57392"/>
        <dbReference type="ChEBI" id="CHEBI:58343"/>
        <dbReference type="ChEBI" id="CHEBI:172362"/>
    </reaction>
    <physiologicalReaction direction="left-to-right" evidence="6">
        <dbReference type="Rhea" id="RHEA:67465"/>
    </physiologicalReaction>
</comment>
<comment type="catalytic activity">
    <reaction evidence="3">
        <text>malonyl-CoA + H2O = malonyl-4'-phosphopantetheine + adenosine 3',5'-bisphosphate + 2 H(+)</text>
        <dbReference type="Rhea" id="RHEA:67468"/>
        <dbReference type="ChEBI" id="CHEBI:15377"/>
        <dbReference type="ChEBI" id="CHEBI:15378"/>
        <dbReference type="ChEBI" id="CHEBI:57384"/>
        <dbReference type="ChEBI" id="CHEBI:58343"/>
        <dbReference type="ChEBI" id="CHEBI:172363"/>
    </reaction>
    <physiologicalReaction direction="left-to-right" evidence="6">
        <dbReference type="Rhea" id="RHEA:67469"/>
    </physiologicalReaction>
</comment>
<comment type="catalytic activity">
    <reaction evidence="3">
        <text>succinyl-CoA + H2O = succinyl-4'-phosphopantetheine + adenosine 3',5'-bisphosphate + 2 H(+)</text>
        <dbReference type="Rhea" id="RHEA:67472"/>
        <dbReference type="ChEBI" id="CHEBI:15377"/>
        <dbReference type="ChEBI" id="CHEBI:15378"/>
        <dbReference type="ChEBI" id="CHEBI:57292"/>
        <dbReference type="ChEBI" id="CHEBI:58343"/>
        <dbReference type="ChEBI" id="CHEBI:172364"/>
    </reaction>
    <physiologicalReaction direction="left-to-right" evidence="6">
        <dbReference type="Rhea" id="RHEA:67473"/>
    </physiologicalReaction>
</comment>
<comment type="catalytic activity">
    <reaction evidence="7">
        <text>a 5'-end CoA-ribonucleoside in mRNA + H2O = a 5'-end phospho-adenosine-phospho-ribonucleoside in mRNA + (R)-4'-phosphopantetheine + 2 H(+)</text>
        <dbReference type="Rhea" id="RHEA:67592"/>
        <dbReference type="Rhea" id="RHEA-COMP:15719"/>
        <dbReference type="Rhea" id="RHEA-COMP:17276"/>
        <dbReference type="ChEBI" id="CHEBI:15377"/>
        <dbReference type="ChEBI" id="CHEBI:15378"/>
        <dbReference type="ChEBI" id="CHEBI:61723"/>
        <dbReference type="ChEBI" id="CHEBI:144051"/>
        <dbReference type="ChEBI" id="CHEBI:172371"/>
    </reaction>
    <physiologicalReaction direction="left-to-right" evidence="7">
        <dbReference type="Rhea" id="RHEA:67593"/>
    </physiologicalReaction>
</comment>
<comment type="cofactor">
    <cofactor evidence="3">
        <name>Mg(2+)</name>
        <dbReference type="ChEBI" id="CHEBI:18420"/>
    </cofactor>
    <cofactor evidence="3">
        <name>Mn(2+)</name>
        <dbReference type="ChEBI" id="CHEBI:29035"/>
    </cofactor>
</comment>
<comment type="biophysicochemical properties">
    <kinetics>
        <KM evidence="3">707 uM for acetyl-CoA</KM>
        <KM evidence="3">318 uM for propanol-CoA</KM>
        <KM evidence="3">224 uM for butanoyl-CoA</KM>
        <KM evidence="3">233 uM for malonyl-CoA</KM>
        <KM evidence="3">329 uM for succinyl-CoA</KM>
        <KM evidence="3">251 uM for hexanoyl-CoA</KM>
    </kinetics>
</comment>
<comment type="subunit">
    <text evidence="3">Monomer.</text>
</comment>
<comment type="subcellular location">
    <subcellularLocation>
        <location evidence="3">Mitochondrion</location>
    </subcellularLocation>
</comment>
<comment type="tissue specificity">
    <text evidence="3">Expressed at the highest levels in the kidneys, heart, brown adipose tissue and liver (at protein level) (PubMed:31004344). Expressed at lower levels in the brain, skeletal muscle, and white adipose tissue (at protein level) (PubMed:31004344).</text>
</comment>
<comment type="similarity">
    <text evidence="5">Belongs to the Nudix hydrolase family.</text>
</comment>
<keyword id="KW-0378">Hydrolase</keyword>
<keyword id="KW-0460">Magnesium</keyword>
<keyword id="KW-0464">Manganese</keyword>
<keyword id="KW-0479">Metal-binding</keyword>
<keyword id="KW-0496">Mitochondrion</keyword>
<keyword id="KW-1185">Reference proteome</keyword>
<dbReference type="EC" id="3.6.1.-"/>
<dbReference type="EC" id="3.6.1.77" evidence="3"/>
<dbReference type="EMBL" id="AK002605">
    <property type="protein sequence ID" value="BAB22224.1"/>
    <property type="molecule type" value="mRNA"/>
</dbReference>
<dbReference type="EMBL" id="AK009700">
    <property type="protein sequence ID" value="BAB26447.1"/>
    <property type="molecule type" value="mRNA"/>
</dbReference>
<dbReference type="EMBL" id="AK045197">
    <property type="protein sequence ID" value="BAC32259.1"/>
    <property type="molecule type" value="mRNA"/>
</dbReference>
<dbReference type="EMBL" id="AK170076">
    <property type="protein sequence ID" value="BAE41549.1"/>
    <property type="molecule type" value="mRNA"/>
</dbReference>
<dbReference type="EMBL" id="BC056443">
    <property type="protein sequence ID" value="AAH56443.1"/>
    <property type="molecule type" value="mRNA"/>
</dbReference>
<dbReference type="CCDS" id="CCDS29408.1"/>
<dbReference type="RefSeq" id="NP_079805.1">
    <property type="nucleotide sequence ID" value="NM_025529.3"/>
</dbReference>
<dbReference type="SMR" id="Q9CR24"/>
<dbReference type="FunCoup" id="Q9CR24">
    <property type="interactions" value="653"/>
</dbReference>
<dbReference type="STRING" id="10090.ENSMUSP00000025802"/>
<dbReference type="iPTMnet" id="Q9CR24"/>
<dbReference type="PhosphoSitePlus" id="Q9CR24"/>
<dbReference type="SwissPalm" id="Q9CR24"/>
<dbReference type="jPOST" id="Q9CR24"/>
<dbReference type="PaxDb" id="10090-ENSMUSP00000025802"/>
<dbReference type="PeptideAtlas" id="Q9CR24"/>
<dbReference type="ProteomicsDB" id="287854"/>
<dbReference type="Pumba" id="Q9CR24"/>
<dbReference type="DNASU" id="66387"/>
<dbReference type="Ensembl" id="ENSMUST00000025802.10">
    <property type="protein sequence ID" value="ENSMUSP00000025802.4"/>
    <property type="gene ID" value="ENSMUSG00000110949.2"/>
</dbReference>
<dbReference type="Ensembl" id="ENSMUST00000155405.8">
    <property type="protein sequence ID" value="ENSMUSP00000119218.2"/>
    <property type="gene ID" value="ENSMUSG00000024869.11"/>
</dbReference>
<dbReference type="GeneID" id="66387"/>
<dbReference type="KEGG" id="mmu:66387"/>
<dbReference type="UCSC" id="uc008fyb.1">
    <property type="organism name" value="mouse"/>
</dbReference>
<dbReference type="AGR" id="MGI:1913637"/>
<dbReference type="AGR" id="MGI:6155029"/>
<dbReference type="CTD" id="254552"/>
<dbReference type="MGI" id="MGI:1913637">
    <property type="gene designation" value="Nudt8"/>
</dbReference>
<dbReference type="VEuPathDB" id="HostDB:ENSMUSG00000024869"/>
<dbReference type="VEuPathDB" id="HostDB:ENSMUSG00000110949"/>
<dbReference type="eggNOG" id="ENOG502SDBZ">
    <property type="taxonomic scope" value="Eukaryota"/>
</dbReference>
<dbReference type="GeneTree" id="ENSGT00940000162775"/>
<dbReference type="HOGENOM" id="CLU_040940_4_0_1"/>
<dbReference type="InParanoid" id="Q9CR24"/>
<dbReference type="OMA" id="YYIWGAT"/>
<dbReference type="OrthoDB" id="10262892at2759"/>
<dbReference type="PhylomeDB" id="Q9CR24"/>
<dbReference type="TreeFam" id="TF106350"/>
<dbReference type="BioGRID-ORCS" id="66387">
    <property type="hits" value="1 hit in 76 CRISPR screens"/>
</dbReference>
<dbReference type="ChiTaRS" id="Nudt8">
    <property type="organism name" value="mouse"/>
</dbReference>
<dbReference type="PRO" id="PR:Q9CR24"/>
<dbReference type="Proteomes" id="UP000000589">
    <property type="component" value="Chromosome 19"/>
</dbReference>
<dbReference type="RNAct" id="Q9CR24">
    <property type="molecule type" value="protein"/>
</dbReference>
<dbReference type="Bgee" id="ENSMUSG00000024869">
    <property type="expression patterns" value="Expressed in cortical plate and 55 other cell types or tissues"/>
</dbReference>
<dbReference type="GO" id="GO:0005759">
    <property type="term" value="C:mitochondrial matrix"/>
    <property type="evidence" value="ECO:0000304"/>
    <property type="project" value="Reactome"/>
</dbReference>
<dbReference type="GO" id="GO:0005739">
    <property type="term" value="C:mitochondrion"/>
    <property type="evidence" value="ECO:0000314"/>
    <property type="project" value="UniProtKB"/>
</dbReference>
<dbReference type="GO" id="GO:0010945">
    <property type="term" value="F:coenzyme A diphosphatase activity"/>
    <property type="evidence" value="ECO:0000269"/>
    <property type="project" value="Reactome"/>
</dbReference>
<dbReference type="GO" id="GO:0000287">
    <property type="term" value="F:magnesium ion binding"/>
    <property type="evidence" value="ECO:0000314"/>
    <property type="project" value="UniProtKB"/>
</dbReference>
<dbReference type="GO" id="GO:0030145">
    <property type="term" value="F:manganese ion binding"/>
    <property type="evidence" value="ECO:0000314"/>
    <property type="project" value="UniProtKB"/>
</dbReference>
<dbReference type="GO" id="GO:0046356">
    <property type="term" value="P:acetyl-CoA catabolic process"/>
    <property type="evidence" value="ECO:0000314"/>
    <property type="project" value="UniProtKB"/>
</dbReference>
<dbReference type="GO" id="GO:0044580">
    <property type="term" value="P:butyryl-CoA catabolic process"/>
    <property type="evidence" value="ECO:0000314"/>
    <property type="project" value="UniProtKB"/>
</dbReference>
<dbReference type="GO" id="GO:0015938">
    <property type="term" value="P:coenzyme A catabolic process"/>
    <property type="evidence" value="ECO:0000314"/>
    <property type="project" value="UniProtKB"/>
</dbReference>
<dbReference type="GO" id="GO:2001294">
    <property type="term" value="P:malonyl-CoA catabolic process"/>
    <property type="evidence" value="ECO:0000314"/>
    <property type="project" value="UniProtKB"/>
</dbReference>
<dbReference type="GO" id="GO:0036114">
    <property type="term" value="P:medium-chain fatty-acyl-CoA catabolic process"/>
    <property type="evidence" value="ECO:0000314"/>
    <property type="project" value="UniProtKB"/>
</dbReference>
<dbReference type="GO" id="GO:1902859">
    <property type="term" value="P:propionyl-CoA catabolic process"/>
    <property type="evidence" value="ECO:0000314"/>
    <property type="project" value="UniProtKB"/>
</dbReference>
<dbReference type="GO" id="GO:1901289">
    <property type="term" value="P:succinyl-CoA catabolic process"/>
    <property type="evidence" value="ECO:0000314"/>
    <property type="project" value="UniProtKB"/>
</dbReference>
<dbReference type="CDD" id="cd03426">
    <property type="entry name" value="NUDIX_CoAse_Nudt7"/>
    <property type="match status" value="1"/>
</dbReference>
<dbReference type="FunFam" id="3.90.79.10:FF:000126">
    <property type="entry name" value="Nucleoside diphosphate-linked moiety X motif 8"/>
    <property type="match status" value="1"/>
</dbReference>
<dbReference type="Gene3D" id="3.90.79.10">
    <property type="entry name" value="Nucleoside Triphosphate Pyrophosphohydrolase"/>
    <property type="match status" value="1"/>
</dbReference>
<dbReference type="InterPro" id="IPR045121">
    <property type="entry name" value="CoAse"/>
</dbReference>
<dbReference type="InterPro" id="IPR015797">
    <property type="entry name" value="NUDIX_hydrolase-like_dom_sf"/>
</dbReference>
<dbReference type="InterPro" id="IPR000086">
    <property type="entry name" value="NUDIX_hydrolase_dom"/>
</dbReference>
<dbReference type="PANTHER" id="PTHR12992:SF11">
    <property type="entry name" value="MITOCHONDRIAL COENZYME A DIPHOSPHATASE NUDT8"/>
    <property type="match status" value="1"/>
</dbReference>
<dbReference type="PANTHER" id="PTHR12992">
    <property type="entry name" value="NUDIX HYDROLASE"/>
    <property type="match status" value="1"/>
</dbReference>
<dbReference type="Pfam" id="PF00293">
    <property type="entry name" value="NUDIX"/>
    <property type="match status" value="1"/>
</dbReference>
<dbReference type="SUPFAM" id="SSF55811">
    <property type="entry name" value="Nudix"/>
    <property type="match status" value="1"/>
</dbReference>
<dbReference type="PROSITE" id="PS51462">
    <property type="entry name" value="NUDIX"/>
    <property type="match status" value="1"/>
</dbReference>
<name>NUDT8_MOUSE</name>
<feature type="chain" id="PRO_0000019949" description="Mitochondrial coenzyme A diphosphatase NUDT8">
    <location>
        <begin position="1"/>
        <end position="210"/>
    </location>
</feature>
<feature type="domain" description="Nudix hydrolase" evidence="2">
    <location>
        <begin position="25"/>
        <end position="172"/>
    </location>
</feature>
<feature type="short sequence motif" description="Nudix box">
    <location>
        <begin position="70"/>
        <end position="91"/>
    </location>
</feature>
<feature type="binding site" evidence="1">
    <location>
        <position position="85"/>
    </location>
    <ligand>
        <name>Mg(2+)</name>
        <dbReference type="ChEBI" id="CHEBI:18420"/>
    </ligand>
</feature>
<feature type="binding site" evidence="1">
    <location>
        <position position="89"/>
    </location>
    <ligand>
        <name>Mg(2+)</name>
        <dbReference type="ChEBI" id="CHEBI:18420"/>
    </ligand>
</feature>
<feature type="modified residue" description="N6-succinyllysine" evidence="8">
    <location>
        <position position="70"/>
    </location>
</feature>
<feature type="modified residue" description="N6-succinyllysine" evidence="8">
    <location>
        <position position="96"/>
    </location>
</feature>
<gene>
    <name type="primary">Nudt8</name>
</gene>
<protein>
    <recommendedName>
        <fullName>Mitochondrial coenzyme A diphosphatase NUDT8</fullName>
        <ecNumber>3.6.1.-</ecNumber>
        <ecNumber evidence="3">3.6.1.77</ecNumber>
    </recommendedName>
    <alternativeName>
        <fullName>Nucleoside diphosphate-linked moiety X motif 8</fullName>
        <shortName>Nudix motif 8</shortName>
    </alternativeName>
</protein>
<reference key="1">
    <citation type="journal article" date="2005" name="Science">
        <title>The transcriptional landscape of the mammalian genome.</title>
        <authorList>
            <person name="Carninci P."/>
            <person name="Kasukawa T."/>
            <person name="Katayama S."/>
            <person name="Gough J."/>
            <person name="Frith M.C."/>
            <person name="Maeda N."/>
            <person name="Oyama R."/>
            <person name="Ravasi T."/>
            <person name="Lenhard B."/>
            <person name="Wells C."/>
            <person name="Kodzius R."/>
            <person name="Shimokawa K."/>
            <person name="Bajic V.B."/>
            <person name="Brenner S.E."/>
            <person name="Batalov S."/>
            <person name="Forrest A.R."/>
            <person name="Zavolan M."/>
            <person name="Davis M.J."/>
            <person name="Wilming L.G."/>
            <person name="Aidinis V."/>
            <person name="Allen J.E."/>
            <person name="Ambesi-Impiombato A."/>
            <person name="Apweiler R."/>
            <person name="Aturaliya R.N."/>
            <person name="Bailey T.L."/>
            <person name="Bansal M."/>
            <person name="Baxter L."/>
            <person name="Beisel K.W."/>
            <person name="Bersano T."/>
            <person name="Bono H."/>
            <person name="Chalk A.M."/>
            <person name="Chiu K.P."/>
            <person name="Choudhary V."/>
            <person name="Christoffels A."/>
            <person name="Clutterbuck D.R."/>
            <person name="Crowe M.L."/>
            <person name="Dalla E."/>
            <person name="Dalrymple B.P."/>
            <person name="de Bono B."/>
            <person name="Della Gatta G."/>
            <person name="di Bernardo D."/>
            <person name="Down T."/>
            <person name="Engstrom P."/>
            <person name="Fagiolini M."/>
            <person name="Faulkner G."/>
            <person name="Fletcher C.F."/>
            <person name="Fukushima T."/>
            <person name="Furuno M."/>
            <person name="Futaki S."/>
            <person name="Gariboldi M."/>
            <person name="Georgii-Hemming P."/>
            <person name="Gingeras T.R."/>
            <person name="Gojobori T."/>
            <person name="Green R.E."/>
            <person name="Gustincich S."/>
            <person name="Harbers M."/>
            <person name="Hayashi Y."/>
            <person name="Hensch T.K."/>
            <person name="Hirokawa N."/>
            <person name="Hill D."/>
            <person name="Huminiecki L."/>
            <person name="Iacono M."/>
            <person name="Ikeo K."/>
            <person name="Iwama A."/>
            <person name="Ishikawa T."/>
            <person name="Jakt M."/>
            <person name="Kanapin A."/>
            <person name="Katoh M."/>
            <person name="Kawasawa Y."/>
            <person name="Kelso J."/>
            <person name="Kitamura H."/>
            <person name="Kitano H."/>
            <person name="Kollias G."/>
            <person name="Krishnan S.P."/>
            <person name="Kruger A."/>
            <person name="Kummerfeld S.K."/>
            <person name="Kurochkin I.V."/>
            <person name="Lareau L.F."/>
            <person name="Lazarevic D."/>
            <person name="Lipovich L."/>
            <person name="Liu J."/>
            <person name="Liuni S."/>
            <person name="McWilliam S."/>
            <person name="Madan Babu M."/>
            <person name="Madera M."/>
            <person name="Marchionni L."/>
            <person name="Matsuda H."/>
            <person name="Matsuzawa S."/>
            <person name="Miki H."/>
            <person name="Mignone F."/>
            <person name="Miyake S."/>
            <person name="Morris K."/>
            <person name="Mottagui-Tabar S."/>
            <person name="Mulder N."/>
            <person name="Nakano N."/>
            <person name="Nakauchi H."/>
            <person name="Ng P."/>
            <person name="Nilsson R."/>
            <person name="Nishiguchi S."/>
            <person name="Nishikawa S."/>
            <person name="Nori F."/>
            <person name="Ohara O."/>
            <person name="Okazaki Y."/>
            <person name="Orlando V."/>
            <person name="Pang K.C."/>
            <person name="Pavan W.J."/>
            <person name="Pavesi G."/>
            <person name="Pesole G."/>
            <person name="Petrovsky N."/>
            <person name="Piazza S."/>
            <person name="Reed J."/>
            <person name="Reid J.F."/>
            <person name="Ring B.Z."/>
            <person name="Ringwald M."/>
            <person name="Rost B."/>
            <person name="Ruan Y."/>
            <person name="Salzberg S.L."/>
            <person name="Sandelin A."/>
            <person name="Schneider C."/>
            <person name="Schoenbach C."/>
            <person name="Sekiguchi K."/>
            <person name="Semple C.A."/>
            <person name="Seno S."/>
            <person name="Sessa L."/>
            <person name="Sheng Y."/>
            <person name="Shibata Y."/>
            <person name="Shimada H."/>
            <person name="Shimada K."/>
            <person name="Silva D."/>
            <person name="Sinclair B."/>
            <person name="Sperling S."/>
            <person name="Stupka E."/>
            <person name="Sugiura K."/>
            <person name="Sultana R."/>
            <person name="Takenaka Y."/>
            <person name="Taki K."/>
            <person name="Tammoja K."/>
            <person name="Tan S.L."/>
            <person name="Tang S."/>
            <person name="Taylor M.S."/>
            <person name="Tegner J."/>
            <person name="Teichmann S.A."/>
            <person name="Ueda H.R."/>
            <person name="van Nimwegen E."/>
            <person name="Verardo R."/>
            <person name="Wei C.L."/>
            <person name="Yagi K."/>
            <person name="Yamanishi H."/>
            <person name="Zabarovsky E."/>
            <person name="Zhu S."/>
            <person name="Zimmer A."/>
            <person name="Hide W."/>
            <person name="Bult C."/>
            <person name="Grimmond S.M."/>
            <person name="Teasdale R.D."/>
            <person name="Liu E.T."/>
            <person name="Brusic V."/>
            <person name="Quackenbush J."/>
            <person name="Wahlestedt C."/>
            <person name="Mattick J.S."/>
            <person name="Hume D.A."/>
            <person name="Kai C."/>
            <person name="Sasaki D."/>
            <person name="Tomaru Y."/>
            <person name="Fukuda S."/>
            <person name="Kanamori-Katayama M."/>
            <person name="Suzuki M."/>
            <person name="Aoki J."/>
            <person name="Arakawa T."/>
            <person name="Iida J."/>
            <person name="Imamura K."/>
            <person name="Itoh M."/>
            <person name="Kato T."/>
            <person name="Kawaji H."/>
            <person name="Kawagashira N."/>
            <person name="Kawashima T."/>
            <person name="Kojima M."/>
            <person name="Kondo S."/>
            <person name="Konno H."/>
            <person name="Nakano K."/>
            <person name="Ninomiya N."/>
            <person name="Nishio T."/>
            <person name="Okada M."/>
            <person name="Plessy C."/>
            <person name="Shibata K."/>
            <person name="Shiraki T."/>
            <person name="Suzuki S."/>
            <person name="Tagami M."/>
            <person name="Waki K."/>
            <person name="Watahiki A."/>
            <person name="Okamura-Oho Y."/>
            <person name="Suzuki H."/>
            <person name="Kawai J."/>
            <person name="Hayashizaki Y."/>
        </authorList>
    </citation>
    <scope>NUCLEOTIDE SEQUENCE [LARGE SCALE MRNA]</scope>
    <source>
        <strain>C57BL/6J</strain>
        <strain>NOD</strain>
        <tissue>Kidney</tissue>
        <tissue>Tongue</tissue>
    </source>
</reference>
<reference key="2">
    <citation type="journal article" date="2004" name="Genome Res.">
        <title>The status, quality, and expansion of the NIH full-length cDNA project: the Mammalian Gene Collection (MGC).</title>
        <authorList>
            <consortium name="The MGC Project Team"/>
        </authorList>
    </citation>
    <scope>NUCLEOTIDE SEQUENCE [LARGE SCALE MRNA]</scope>
    <source>
        <strain>C57BL/6J</strain>
        <tissue>Brain</tissue>
    </source>
</reference>
<reference key="3">
    <citation type="journal article" date="2010" name="Cell">
        <title>A tissue-specific atlas of mouse protein phosphorylation and expression.</title>
        <authorList>
            <person name="Huttlin E.L."/>
            <person name="Jedrychowski M.P."/>
            <person name="Elias J.E."/>
            <person name="Goswami T."/>
            <person name="Rad R."/>
            <person name="Beausoleil S.A."/>
            <person name="Villen J."/>
            <person name="Haas W."/>
            <person name="Sowa M.E."/>
            <person name="Gygi S.P."/>
        </authorList>
    </citation>
    <scope>IDENTIFICATION BY MASS SPECTROMETRY [LARGE SCALE ANALYSIS]</scope>
    <source>
        <tissue>Brown adipose tissue</tissue>
        <tissue>Heart</tissue>
        <tissue>Kidney</tissue>
        <tissue>Liver</tissue>
        <tissue>Pancreas</tissue>
    </source>
</reference>
<reference key="4">
    <citation type="journal article" date="2013" name="Mol. Cell">
        <title>SIRT5-mediated lysine desuccinylation impacts diverse metabolic pathways.</title>
        <authorList>
            <person name="Park J."/>
            <person name="Chen Y."/>
            <person name="Tishkoff D.X."/>
            <person name="Peng C."/>
            <person name="Tan M."/>
            <person name="Dai L."/>
            <person name="Xie Z."/>
            <person name="Zhang Y."/>
            <person name="Zwaans B.M."/>
            <person name="Skinner M.E."/>
            <person name="Lombard D.B."/>
            <person name="Zhao Y."/>
        </authorList>
    </citation>
    <scope>SUCCINYLATION [LARGE SCALE ANALYSIS] AT LYS-70 AND LYS-96</scope>
    <scope>IDENTIFICATION BY MASS SPECTROMETRY [LARGE SCALE ANALYSIS]</scope>
    <source>
        <tissue>Liver</tissue>
    </source>
</reference>
<reference key="5">
    <citation type="journal article" date="2019" name="FEBS Lett.">
        <title>Nudt8 is a novel CoA diphosphohydrolase that resides in the mitochondria.</title>
        <authorList>
            <person name="Kerr E.W."/>
            <person name="Shumar S.A."/>
            <person name="Leonardi R."/>
        </authorList>
    </citation>
    <scope>FUNCTION</scope>
    <scope>CATALYTIC ACTIVITY</scope>
    <scope>SUBUNIT</scope>
    <scope>SUBCELLULAR LOCATION</scope>
    <scope>COFACTOR</scope>
    <scope>BIOPHYSICOCHEMICAL PROPERTIES</scope>
    <scope>TISSUE SPECIFICITY</scope>
</reference>
<reference key="6">
    <citation type="journal article" date="2020" name="Nucleic Acids Res.">
        <title>Mammalian Nudix proteins cleave nucleotide metabolite caps on RNAs.</title>
        <authorList>
            <person name="Sharma S."/>
            <person name="Grudzien-Nogalska E."/>
            <person name="Hamilton K."/>
            <person name="Jiao X."/>
            <person name="Yang J."/>
            <person name="Tong L."/>
            <person name="Kiledjian M."/>
        </authorList>
    </citation>
    <scope>FUNCTION</scope>
    <scope>CATALYTIC ACTIVITY</scope>
</reference>